<organism>
    <name type="scientific">Euplotes crassus</name>
    <dbReference type="NCBI Taxonomy" id="5936"/>
    <lineage>
        <taxon>Eukaryota</taxon>
        <taxon>Sar</taxon>
        <taxon>Alveolata</taxon>
        <taxon>Ciliophora</taxon>
        <taxon>Intramacronucleata</taxon>
        <taxon>Spirotrichea</taxon>
        <taxon>Hypotrichia</taxon>
        <taxon>Euplotida</taxon>
        <taxon>Euplotidae</taxon>
        <taxon>Moneuplotes</taxon>
    </lineage>
</organism>
<proteinExistence type="evidence at transcript level"/>
<feature type="chain" id="PRO_0000048460" description="Tubulin gamma-1 chain">
    <location>
        <begin position="1"/>
        <end position="462"/>
    </location>
</feature>
<feature type="binding site" evidence="1">
    <location>
        <begin position="142"/>
        <end position="148"/>
    </location>
    <ligand>
        <name>GTP</name>
        <dbReference type="ChEBI" id="CHEBI:37565"/>
    </ligand>
</feature>
<sequence length="462" mass="51959">MPREIITCQVGQCGNQIGMEFWKQLCMEHGINPEGILEEYAQNGEDRKDVFFYQADDEHYVPRAVLIDLEPRVINGIQKSPYASLYNPENIFISKHGGGAGNNWGRGYCDAEKVQEEIIEMIDREADGSDSLEGFVLTHSIAGGTGSGFGSYLLERLNDHYPKKLIQTYSVFPNENDVVVQPYNCLLSMKRLILNADCVVVLDNTALTSIAVDRLKLLQPTFPQINSIVSTVMAASTTTLRYPGYMNNDLVGLIASLVPTPRCHFLMTGYTPLSLIDQKVTSVRKTTVLDVMRRLLQTKNIMATGAIKKGAYMSILNIIQGDVDPTQVHKSLQRIRERKLANFIPWGPASIQVALSKKSPYMESGHKVSGLMLANHTGIRSIFKVIYDQYRTFRKRDAYMNIFKQTKIFEDNLDEFDSSDEVVKSLIEDSAAAEKMDYINWGNDDDDMGYDPRAPPNFSSMQ</sequence>
<evidence type="ECO:0000255" key="1"/>
<evidence type="ECO:0000305" key="2"/>
<accession>P54403</accession>
<protein>
    <recommendedName>
        <fullName>Tubulin gamma-1 chain</fullName>
    </recommendedName>
    <alternativeName>
        <fullName>Gamma-1-tubulin</fullName>
    </alternativeName>
</protein>
<dbReference type="EMBL" id="X85234">
    <property type="protein sequence ID" value="CAA59489.1"/>
    <property type="molecule type" value="Genomic_DNA"/>
</dbReference>
<dbReference type="EMBL" id="Y09550">
    <property type="protein sequence ID" value="CAA70741.1"/>
    <property type="molecule type" value="mRNA"/>
</dbReference>
<dbReference type="PIR" id="S53084">
    <property type="entry name" value="S53084"/>
</dbReference>
<dbReference type="SMR" id="P54403"/>
<dbReference type="GO" id="GO:0005813">
    <property type="term" value="C:centrosome"/>
    <property type="evidence" value="ECO:0007669"/>
    <property type="project" value="UniProtKB-SubCell"/>
</dbReference>
<dbReference type="GO" id="GO:0005737">
    <property type="term" value="C:cytoplasm"/>
    <property type="evidence" value="ECO:0007669"/>
    <property type="project" value="UniProtKB-KW"/>
</dbReference>
<dbReference type="GO" id="GO:0000930">
    <property type="term" value="C:gamma-tubulin complex"/>
    <property type="evidence" value="ECO:0007669"/>
    <property type="project" value="InterPro"/>
</dbReference>
<dbReference type="GO" id="GO:0005874">
    <property type="term" value="C:microtubule"/>
    <property type="evidence" value="ECO:0007669"/>
    <property type="project" value="UniProtKB-KW"/>
</dbReference>
<dbReference type="GO" id="GO:0005525">
    <property type="term" value="F:GTP binding"/>
    <property type="evidence" value="ECO:0007669"/>
    <property type="project" value="UniProtKB-KW"/>
</dbReference>
<dbReference type="GO" id="GO:0031122">
    <property type="term" value="P:cytoplasmic microtubule organization"/>
    <property type="evidence" value="ECO:0007669"/>
    <property type="project" value="InterPro"/>
</dbReference>
<dbReference type="GO" id="GO:0007020">
    <property type="term" value="P:microtubule nucleation"/>
    <property type="evidence" value="ECO:0007669"/>
    <property type="project" value="InterPro"/>
</dbReference>
<dbReference type="CDD" id="cd02188">
    <property type="entry name" value="gamma_tubulin"/>
    <property type="match status" value="1"/>
</dbReference>
<dbReference type="FunFam" id="1.10.287.600:FF:000004">
    <property type="entry name" value="Tubulin gamma chain"/>
    <property type="match status" value="1"/>
</dbReference>
<dbReference type="FunFam" id="3.30.1330.20:FF:000003">
    <property type="entry name" value="Tubulin gamma chain"/>
    <property type="match status" value="1"/>
</dbReference>
<dbReference type="FunFam" id="3.40.50.1440:FF:000010">
    <property type="entry name" value="Tubulin gamma chain"/>
    <property type="match status" value="1"/>
</dbReference>
<dbReference type="Gene3D" id="1.10.287.600">
    <property type="entry name" value="Helix hairpin bin"/>
    <property type="match status" value="1"/>
</dbReference>
<dbReference type="Gene3D" id="3.30.1330.20">
    <property type="entry name" value="Tubulin/FtsZ, C-terminal domain"/>
    <property type="match status" value="1"/>
</dbReference>
<dbReference type="Gene3D" id="3.40.50.1440">
    <property type="entry name" value="Tubulin/FtsZ, GTPase domain"/>
    <property type="match status" value="1"/>
</dbReference>
<dbReference type="InterPro" id="IPR002454">
    <property type="entry name" value="Gamma_tubulin"/>
</dbReference>
<dbReference type="InterPro" id="IPR008280">
    <property type="entry name" value="Tub_FtsZ_C"/>
</dbReference>
<dbReference type="InterPro" id="IPR000217">
    <property type="entry name" value="Tubulin"/>
</dbReference>
<dbReference type="InterPro" id="IPR037103">
    <property type="entry name" value="Tubulin/FtsZ-like_C"/>
</dbReference>
<dbReference type="InterPro" id="IPR018316">
    <property type="entry name" value="Tubulin/FtsZ_2-layer-sand-dom"/>
</dbReference>
<dbReference type="InterPro" id="IPR036525">
    <property type="entry name" value="Tubulin/FtsZ_GTPase_sf"/>
</dbReference>
<dbReference type="InterPro" id="IPR023123">
    <property type="entry name" value="Tubulin_C"/>
</dbReference>
<dbReference type="InterPro" id="IPR017975">
    <property type="entry name" value="Tubulin_CS"/>
</dbReference>
<dbReference type="InterPro" id="IPR003008">
    <property type="entry name" value="Tubulin_FtsZ_GTPase"/>
</dbReference>
<dbReference type="PANTHER" id="PTHR11588">
    <property type="entry name" value="TUBULIN"/>
    <property type="match status" value="1"/>
</dbReference>
<dbReference type="Pfam" id="PF00091">
    <property type="entry name" value="Tubulin"/>
    <property type="match status" value="1"/>
</dbReference>
<dbReference type="Pfam" id="PF03953">
    <property type="entry name" value="Tubulin_C"/>
    <property type="match status" value="1"/>
</dbReference>
<dbReference type="PRINTS" id="PR01164">
    <property type="entry name" value="GAMMATUBULIN"/>
</dbReference>
<dbReference type="PRINTS" id="PR01161">
    <property type="entry name" value="TUBULIN"/>
</dbReference>
<dbReference type="SMART" id="SM00864">
    <property type="entry name" value="Tubulin"/>
    <property type="match status" value="1"/>
</dbReference>
<dbReference type="SMART" id="SM00865">
    <property type="entry name" value="Tubulin_C"/>
    <property type="match status" value="1"/>
</dbReference>
<dbReference type="SUPFAM" id="SSF55307">
    <property type="entry name" value="Tubulin C-terminal domain-like"/>
    <property type="match status" value="1"/>
</dbReference>
<dbReference type="SUPFAM" id="SSF52490">
    <property type="entry name" value="Tubulin nucleotide-binding domain-like"/>
    <property type="match status" value="1"/>
</dbReference>
<dbReference type="PROSITE" id="PS00227">
    <property type="entry name" value="TUBULIN"/>
    <property type="match status" value="1"/>
</dbReference>
<keyword id="KW-0963">Cytoplasm</keyword>
<keyword id="KW-0206">Cytoskeleton</keyword>
<keyword id="KW-0342">GTP-binding</keyword>
<keyword id="KW-0493">Microtubule</keyword>
<keyword id="KW-0547">Nucleotide-binding</keyword>
<name>TBG1_EUPCR</name>
<comment type="function">
    <text>Tubulin is the major constituent of microtubules. The gamma chain is found at microtubule organizing centers (MTOC) such as the spindle poles or the centrosome, suggesting that it is involved in the minus-end nucleation of microtubule assembly.</text>
</comment>
<comment type="subcellular location">
    <subcellularLocation>
        <location evidence="2">Cytoplasm</location>
        <location evidence="2">Cytoskeleton</location>
        <location evidence="2">Microtubule organizing center</location>
        <location evidence="2">Centrosome</location>
    </subcellularLocation>
</comment>
<comment type="similarity">
    <text evidence="2">Belongs to the tubulin family.</text>
</comment>
<reference key="1">
    <citation type="journal article" date="1998" name="Gene">
        <title>The two gamma-tubulin-encoding genes of the ciliate Euplotes crassus differ in their sequences, codon usage, transcription initiation sites and poly(A) addition sites.</title>
        <authorList>
            <person name="Tan M."/>
            <person name="Heckmann K."/>
        </authorList>
    </citation>
    <scope>NUCLEOTIDE SEQUENCE [GENOMIC DNA / MRNA]</scope>
</reference>